<sequence>CCQWPCSHGCIPCCY</sequence>
<comment type="function">
    <text evidence="1 3">Does not show any effect on voltage-gated sodium and potassium channels (10 uM of toxin tested), and on nicotinic acetylcholine receptors (5 uM of toxin tested) (PubMed:27801785). Does not show antibacterial activity on both Gram-negative and Gram-positive bacteria (PubMed:27801785). Intraperitoneal injection into fish provokes paralysis (By similarity).</text>
</comment>
<comment type="subcellular location">
    <subcellularLocation>
        <location evidence="3">Secreted</location>
    </subcellularLocation>
</comment>
<comment type="tissue specificity">
    <text evidence="3">Expressed by the venom duct.</text>
</comment>
<comment type="domain">
    <text evidence="5">The cysteine framework is III (CC-C-C-CC). Classified in the M-2 branch, since 2 residues stand between the fourth and the fifth cysteine residues.</text>
</comment>
<comment type="mass spectrometry"/>
<comment type="miscellaneous">
    <text evidence="3">Negative results: does not show effect on Nav1.1, Nav1.2, Nav1.3, Nav1.4, Nav1.5, Nav1.6, Nav1.8 (PubMed:27801785). Does not show effect on Kv1.1, Kv1.2, Kv1.3, Kv1.4, Kv1.5, and Kv1.6 (PubMed:27801785). Does not show effect on muscular (alpha-1-beta-1-delta-epsilon) and neuronal alpha-7, alpha-4-beta-4, and alpha-3-beta-4 nAChRs (PubMed:27801785).</text>
</comment>
<comment type="similarity">
    <text evidence="5">Belongs to the conotoxin M superfamily.</text>
</comment>
<reference key="1">
    <citation type="journal article" date="2016" name="Mar. Drugs">
        <title>Novel conopeptides of largely unexplored indo Pacific Conus sp.</title>
        <authorList>
            <person name="Lebbe E.K."/>
            <person name="Ghequire M.G."/>
            <person name="Peigneur S."/>
            <person name="Mille B.G."/>
            <person name="Devi P."/>
            <person name="Ravichandran S."/>
            <person name="Waelkens E."/>
            <person name="D'Souza L."/>
            <person name="De Mot R."/>
            <person name="Tytgat J."/>
        </authorList>
    </citation>
    <scope>PROTEIN SEQUENCE</scope>
    <scope>AMIDATION AT TYR-15</scope>
    <scope>SUBCELLULAR LOCATION</scope>
    <scope>TISSUE SPECIFICITY</scope>
    <scope>MASS SPECTROMETRY</scope>
    <scope>SYNTHESIS</scope>
    <scope>FUNCTION</scope>
    <source>
        <tissue>Venom</tissue>
    </source>
</reference>
<protein>
    <recommendedName>
        <fullName evidence="4">Conotoxin Asi3a</fullName>
    </recommendedName>
</protein>
<evidence type="ECO:0000250" key="1">
    <source>
        <dbReference type="UniProtKB" id="P0CH15"/>
    </source>
</evidence>
<evidence type="ECO:0000250" key="2">
    <source>
        <dbReference type="UniProtKB" id="P0CI24"/>
    </source>
</evidence>
<evidence type="ECO:0000269" key="3">
    <source>
    </source>
</evidence>
<evidence type="ECO:0000303" key="4">
    <source>
    </source>
</evidence>
<evidence type="ECO:0000305" key="5"/>
<dbReference type="GO" id="GO:0005576">
    <property type="term" value="C:extracellular region"/>
    <property type="evidence" value="ECO:0007669"/>
    <property type="project" value="UniProtKB-SubCell"/>
</dbReference>
<dbReference type="GO" id="GO:0090729">
    <property type="term" value="F:toxin activity"/>
    <property type="evidence" value="ECO:0007669"/>
    <property type="project" value="UniProtKB-KW"/>
</dbReference>
<name>M3A_CONAX</name>
<feature type="peptide" id="PRO_0000439517" description="Conotoxin Asi3a" evidence="3">
    <location>
        <begin position="1"/>
        <end position="15"/>
    </location>
</feature>
<feature type="modified residue" description="Tyrosine amide" evidence="3">
    <location>
        <position position="15"/>
    </location>
</feature>
<feature type="disulfide bond" evidence="2">
    <location>
        <begin position="1"/>
        <end position="14"/>
    </location>
</feature>
<feature type="disulfide bond" evidence="2">
    <location>
        <begin position="2"/>
        <end position="10"/>
    </location>
</feature>
<feature type="disulfide bond" evidence="2">
    <location>
        <begin position="6"/>
        <end position="13"/>
    </location>
</feature>
<proteinExistence type="evidence at protein level"/>
<organism>
    <name type="scientific">Conus asiaticus</name>
    <name type="common">Cone snail</name>
    <dbReference type="NCBI Taxonomy" id="1945508"/>
    <lineage>
        <taxon>Eukaryota</taxon>
        <taxon>Metazoa</taxon>
        <taxon>Spiralia</taxon>
        <taxon>Lophotrochozoa</taxon>
        <taxon>Mollusca</taxon>
        <taxon>Gastropoda</taxon>
        <taxon>Caenogastropoda</taxon>
        <taxon>Neogastropoda</taxon>
        <taxon>Conoidea</taxon>
        <taxon>Conidae</taxon>
        <taxon>Conus</taxon>
        <taxon>Phasmoconus</taxon>
    </lineage>
</organism>
<accession>P0DOZ8</accession>
<keyword id="KW-0027">Amidation</keyword>
<keyword id="KW-0903">Direct protein sequencing</keyword>
<keyword id="KW-1015">Disulfide bond</keyword>
<keyword id="KW-0528">Neurotoxin</keyword>
<keyword id="KW-0964">Secreted</keyword>
<keyword id="KW-0800">Toxin</keyword>